<gene>
    <name evidence="1" type="primary">rplY</name>
    <name evidence="1" type="synonym">ctc</name>
    <name type="ordered locus">ROP_57640</name>
</gene>
<dbReference type="EMBL" id="AP011115">
    <property type="protein sequence ID" value="BAH54011.1"/>
    <property type="molecule type" value="Genomic_DNA"/>
</dbReference>
<dbReference type="RefSeq" id="WP_015889505.1">
    <property type="nucleotide sequence ID" value="NC_012522.1"/>
</dbReference>
<dbReference type="SMR" id="C1AY16"/>
<dbReference type="STRING" id="632772.ROP_57640"/>
<dbReference type="KEGG" id="rop:ROP_57640"/>
<dbReference type="PATRIC" id="fig|632772.20.peg.6019"/>
<dbReference type="HOGENOM" id="CLU_075939_1_0_11"/>
<dbReference type="OrthoDB" id="5242980at2"/>
<dbReference type="Proteomes" id="UP000002212">
    <property type="component" value="Chromosome"/>
</dbReference>
<dbReference type="GO" id="GO:0022625">
    <property type="term" value="C:cytosolic large ribosomal subunit"/>
    <property type="evidence" value="ECO:0007669"/>
    <property type="project" value="TreeGrafter"/>
</dbReference>
<dbReference type="GO" id="GO:0008097">
    <property type="term" value="F:5S rRNA binding"/>
    <property type="evidence" value="ECO:0007669"/>
    <property type="project" value="InterPro"/>
</dbReference>
<dbReference type="GO" id="GO:0003735">
    <property type="term" value="F:structural constituent of ribosome"/>
    <property type="evidence" value="ECO:0007669"/>
    <property type="project" value="InterPro"/>
</dbReference>
<dbReference type="GO" id="GO:0006412">
    <property type="term" value="P:translation"/>
    <property type="evidence" value="ECO:0007669"/>
    <property type="project" value="UniProtKB-UniRule"/>
</dbReference>
<dbReference type="CDD" id="cd00495">
    <property type="entry name" value="Ribosomal_L25_TL5_CTC"/>
    <property type="match status" value="1"/>
</dbReference>
<dbReference type="Gene3D" id="2.170.120.20">
    <property type="entry name" value="Ribosomal protein L25, beta domain"/>
    <property type="match status" value="1"/>
</dbReference>
<dbReference type="Gene3D" id="2.40.240.10">
    <property type="entry name" value="Ribosomal Protein L25, Chain P"/>
    <property type="match status" value="1"/>
</dbReference>
<dbReference type="HAMAP" id="MF_01334">
    <property type="entry name" value="Ribosomal_bL25_CTC"/>
    <property type="match status" value="1"/>
</dbReference>
<dbReference type="InterPro" id="IPR020056">
    <property type="entry name" value="Rbsml_bL25/Gln-tRNA_synth_N"/>
</dbReference>
<dbReference type="InterPro" id="IPR011035">
    <property type="entry name" value="Ribosomal_bL25/Gln-tRNA_synth"/>
</dbReference>
<dbReference type="InterPro" id="IPR020057">
    <property type="entry name" value="Ribosomal_bL25_b-dom"/>
</dbReference>
<dbReference type="InterPro" id="IPR037121">
    <property type="entry name" value="Ribosomal_bL25_C"/>
</dbReference>
<dbReference type="InterPro" id="IPR001021">
    <property type="entry name" value="Ribosomal_bL25_long"/>
</dbReference>
<dbReference type="InterPro" id="IPR029751">
    <property type="entry name" value="Ribosomal_L25_dom"/>
</dbReference>
<dbReference type="InterPro" id="IPR020930">
    <property type="entry name" value="Ribosomal_uL5_bac-type"/>
</dbReference>
<dbReference type="InterPro" id="IPR004029">
    <property type="entry name" value="UreE_N"/>
</dbReference>
<dbReference type="NCBIfam" id="TIGR00731">
    <property type="entry name" value="bL25_bact_ctc"/>
    <property type="match status" value="1"/>
</dbReference>
<dbReference type="NCBIfam" id="NF004131">
    <property type="entry name" value="PRK05618.2-1"/>
    <property type="match status" value="1"/>
</dbReference>
<dbReference type="PANTHER" id="PTHR33284">
    <property type="entry name" value="RIBOSOMAL PROTEIN L25/GLN-TRNA SYNTHETASE, ANTI-CODON-BINDING DOMAIN-CONTAINING PROTEIN"/>
    <property type="match status" value="1"/>
</dbReference>
<dbReference type="PANTHER" id="PTHR33284:SF1">
    <property type="entry name" value="RIBOSOMAL PROTEIN L25_GLN-TRNA SYNTHETASE, ANTI-CODON-BINDING DOMAIN-CONTAINING PROTEIN"/>
    <property type="match status" value="1"/>
</dbReference>
<dbReference type="Pfam" id="PF01386">
    <property type="entry name" value="Ribosomal_L25p"/>
    <property type="match status" value="1"/>
</dbReference>
<dbReference type="Pfam" id="PF14693">
    <property type="entry name" value="Ribosomal_TL5_C"/>
    <property type="match status" value="1"/>
</dbReference>
<dbReference type="SMART" id="SM00988">
    <property type="entry name" value="UreE_N"/>
    <property type="match status" value="1"/>
</dbReference>
<dbReference type="SUPFAM" id="SSF50715">
    <property type="entry name" value="Ribosomal protein L25-like"/>
    <property type="match status" value="1"/>
</dbReference>
<protein>
    <recommendedName>
        <fullName evidence="1">Large ribosomal subunit protein bL25</fullName>
    </recommendedName>
    <alternativeName>
        <fullName evidence="3">50S ribosomal protein L25</fullName>
    </alternativeName>
    <alternativeName>
        <fullName evidence="1">General stress protein CTC</fullName>
    </alternativeName>
</protein>
<reference key="1">
    <citation type="submission" date="2009-03" db="EMBL/GenBank/DDBJ databases">
        <title>Comparison of the complete genome sequences of Rhodococcus erythropolis PR4 and Rhodococcus opacus B4.</title>
        <authorList>
            <person name="Takarada H."/>
            <person name="Sekine M."/>
            <person name="Hosoyama A."/>
            <person name="Yamada R."/>
            <person name="Fujisawa T."/>
            <person name="Omata S."/>
            <person name="Shimizu A."/>
            <person name="Tsukatani N."/>
            <person name="Tanikawa S."/>
            <person name="Fujita N."/>
            <person name="Harayama S."/>
        </authorList>
    </citation>
    <scope>NUCLEOTIDE SEQUENCE [LARGE SCALE GENOMIC DNA]</scope>
    <source>
        <strain>B4</strain>
    </source>
</reference>
<accession>C1AY16</accession>
<proteinExistence type="inferred from homology"/>
<organism>
    <name type="scientific">Rhodococcus opacus (strain B4)</name>
    <dbReference type="NCBI Taxonomy" id="632772"/>
    <lineage>
        <taxon>Bacteria</taxon>
        <taxon>Bacillati</taxon>
        <taxon>Actinomycetota</taxon>
        <taxon>Actinomycetes</taxon>
        <taxon>Mycobacteriales</taxon>
        <taxon>Nocardiaceae</taxon>
        <taxon>Rhodococcus</taxon>
    </lineage>
</organism>
<sequence>MSDENRLVAAVRTEFGKGAARRARRDGQVPAVLYGHGEDPRHLNVPSREFAAILRAHGTNAVLTLDIDGKEQVALTKSVVVHPIRNYIEHADLLVIKKGEKVTVDVPVVVTGEAASGTLVAQDAATVSLEADALHIPEQIEVSVEGLEVGTQILANQLELPKGATLQADEELLIVNVVAAPTAADLEEETGEAEGETAAAPAEEGAES</sequence>
<feature type="chain" id="PRO_1000166180" description="Large ribosomal subunit protein bL25">
    <location>
        <begin position="1"/>
        <end position="208"/>
    </location>
</feature>
<feature type="region of interest" description="Disordered" evidence="2">
    <location>
        <begin position="185"/>
        <end position="208"/>
    </location>
</feature>
<feature type="compositionally biased region" description="Acidic residues" evidence="2">
    <location>
        <begin position="185"/>
        <end position="195"/>
    </location>
</feature>
<feature type="compositionally biased region" description="Low complexity" evidence="2">
    <location>
        <begin position="196"/>
        <end position="208"/>
    </location>
</feature>
<keyword id="KW-0687">Ribonucleoprotein</keyword>
<keyword id="KW-0689">Ribosomal protein</keyword>
<keyword id="KW-0694">RNA-binding</keyword>
<keyword id="KW-0699">rRNA-binding</keyword>
<comment type="function">
    <text evidence="1">This is one of the proteins that binds to the 5S RNA in the ribosome where it forms part of the central protuberance.</text>
</comment>
<comment type="subunit">
    <text evidence="1">Part of the 50S ribosomal subunit; part of the 5S rRNA/L5/L18/L25 subcomplex. Contacts the 5S rRNA. Binds to the 5S rRNA independently of L5 and L18.</text>
</comment>
<comment type="similarity">
    <text evidence="1">Belongs to the bacterial ribosomal protein bL25 family. CTC subfamily.</text>
</comment>
<name>RL25_RHOOB</name>
<evidence type="ECO:0000255" key="1">
    <source>
        <dbReference type="HAMAP-Rule" id="MF_01334"/>
    </source>
</evidence>
<evidence type="ECO:0000256" key="2">
    <source>
        <dbReference type="SAM" id="MobiDB-lite"/>
    </source>
</evidence>
<evidence type="ECO:0000305" key="3"/>